<protein>
    <recommendedName>
        <fullName evidence="1">Bifunctional protein FolD</fullName>
    </recommendedName>
    <domain>
        <recommendedName>
            <fullName evidence="1">Methylenetetrahydrofolate dehydrogenase</fullName>
            <ecNumber evidence="1">1.5.1.5</ecNumber>
        </recommendedName>
    </domain>
    <domain>
        <recommendedName>
            <fullName evidence="1">Methenyltetrahydrofolate cyclohydrolase</fullName>
            <ecNumber evidence="1">3.5.4.9</ecNumber>
        </recommendedName>
    </domain>
</protein>
<comment type="function">
    <text evidence="1">Catalyzes the oxidation of 5,10-methylenetetrahydrofolate to 5,10-methenyltetrahydrofolate and then the hydrolysis of 5,10-methenyltetrahydrofolate to 10-formyltetrahydrofolate.</text>
</comment>
<comment type="catalytic activity">
    <reaction evidence="1">
        <text>(6R)-5,10-methylene-5,6,7,8-tetrahydrofolate + NADP(+) = (6R)-5,10-methenyltetrahydrofolate + NADPH</text>
        <dbReference type="Rhea" id="RHEA:22812"/>
        <dbReference type="ChEBI" id="CHEBI:15636"/>
        <dbReference type="ChEBI" id="CHEBI:57455"/>
        <dbReference type="ChEBI" id="CHEBI:57783"/>
        <dbReference type="ChEBI" id="CHEBI:58349"/>
        <dbReference type="EC" id="1.5.1.5"/>
    </reaction>
</comment>
<comment type="catalytic activity">
    <reaction evidence="1">
        <text>(6R)-5,10-methenyltetrahydrofolate + H2O = (6R)-10-formyltetrahydrofolate + H(+)</text>
        <dbReference type="Rhea" id="RHEA:23700"/>
        <dbReference type="ChEBI" id="CHEBI:15377"/>
        <dbReference type="ChEBI" id="CHEBI:15378"/>
        <dbReference type="ChEBI" id="CHEBI:57455"/>
        <dbReference type="ChEBI" id="CHEBI:195366"/>
        <dbReference type="EC" id="3.5.4.9"/>
    </reaction>
</comment>
<comment type="pathway">
    <text evidence="1">One-carbon metabolism; tetrahydrofolate interconversion.</text>
</comment>
<comment type="subunit">
    <text evidence="1">Homodimer.</text>
</comment>
<comment type="similarity">
    <text evidence="1">Belongs to the tetrahydrofolate dehydrogenase/cyclohydrolase family.</text>
</comment>
<organism>
    <name type="scientific">Clavibacter sepedonicus</name>
    <name type="common">Clavibacter michiganensis subsp. sepedonicus</name>
    <dbReference type="NCBI Taxonomy" id="31964"/>
    <lineage>
        <taxon>Bacteria</taxon>
        <taxon>Bacillati</taxon>
        <taxon>Actinomycetota</taxon>
        <taxon>Actinomycetes</taxon>
        <taxon>Micrococcales</taxon>
        <taxon>Microbacteriaceae</taxon>
        <taxon>Clavibacter</taxon>
    </lineage>
</organism>
<name>FOLD_CLASE</name>
<sequence length="300" mass="31364">MTAVVLDGVATASAVKSELAVRIRALREQGLVPGLGTLLVGDDPGSRSYVAGKHRDCAEVGIESIRVDLPADATEADVRTAIERLNSDPAVTGYIVQLPLPAGIDENAMLELIDPSKDADGLHPTNLGRLVLGVQGELTSPLPCTPAGIVEMLQRYDVPIAGQHVVVVGRGLTVGRPLGLLLTRKGLDATVTLTHSRTRDIEQEVRRADIVVAAVGAAHLVKPEWVKPGAAVLDVGITRVVDPETGKARLTGDVDPAVAEVAGHLSPNPRGVGPMTRAMLLANVVQAAERDARLAAELRG</sequence>
<evidence type="ECO:0000255" key="1">
    <source>
        <dbReference type="HAMAP-Rule" id="MF_01576"/>
    </source>
</evidence>
<dbReference type="EC" id="1.5.1.5" evidence="1"/>
<dbReference type="EC" id="3.5.4.9" evidence="1"/>
<dbReference type="EMBL" id="AM849034">
    <property type="protein sequence ID" value="CAQ00705.1"/>
    <property type="molecule type" value="Genomic_DNA"/>
</dbReference>
<dbReference type="RefSeq" id="WP_012298022.1">
    <property type="nucleotide sequence ID" value="NZ_MZMN01000003.1"/>
</dbReference>
<dbReference type="SMR" id="B0RDR2"/>
<dbReference type="STRING" id="31964.CMS0585"/>
<dbReference type="KEGG" id="cms:CMS0585"/>
<dbReference type="eggNOG" id="COG0190">
    <property type="taxonomic scope" value="Bacteria"/>
</dbReference>
<dbReference type="HOGENOM" id="CLU_034045_1_2_11"/>
<dbReference type="OrthoDB" id="9803580at2"/>
<dbReference type="UniPathway" id="UPA00193"/>
<dbReference type="Proteomes" id="UP000001318">
    <property type="component" value="Chromosome"/>
</dbReference>
<dbReference type="GO" id="GO:0005829">
    <property type="term" value="C:cytosol"/>
    <property type="evidence" value="ECO:0007669"/>
    <property type="project" value="TreeGrafter"/>
</dbReference>
<dbReference type="GO" id="GO:0004477">
    <property type="term" value="F:methenyltetrahydrofolate cyclohydrolase activity"/>
    <property type="evidence" value="ECO:0007669"/>
    <property type="project" value="UniProtKB-UniRule"/>
</dbReference>
<dbReference type="GO" id="GO:0004488">
    <property type="term" value="F:methylenetetrahydrofolate dehydrogenase (NADP+) activity"/>
    <property type="evidence" value="ECO:0007669"/>
    <property type="project" value="UniProtKB-UniRule"/>
</dbReference>
<dbReference type="GO" id="GO:0000105">
    <property type="term" value="P:L-histidine biosynthetic process"/>
    <property type="evidence" value="ECO:0007669"/>
    <property type="project" value="UniProtKB-KW"/>
</dbReference>
<dbReference type="GO" id="GO:0009086">
    <property type="term" value="P:methionine biosynthetic process"/>
    <property type="evidence" value="ECO:0007669"/>
    <property type="project" value="UniProtKB-KW"/>
</dbReference>
<dbReference type="GO" id="GO:0006164">
    <property type="term" value="P:purine nucleotide biosynthetic process"/>
    <property type="evidence" value="ECO:0007669"/>
    <property type="project" value="UniProtKB-KW"/>
</dbReference>
<dbReference type="GO" id="GO:0035999">
    <property type="term" value="P:tetrahydrofolate interconversion"/>
    <property type="evidence" value="ECO:0007669"/>
    <property type="project" value="UniProtKB-UniRule"/>
</dbReference>
<dbReference type="CDD" id="cd01080">
    <property type="entry name" value="NAD_bind_m-THF_DH_Cyclohyd"/>
    <property type="match status" value="1"/>
</dbReference>
<dbReference type="FunFam" id="3.40.50.720:FF:000006">
    <property type="entry name" value="Bifunctional protein FolD"/>
    <property type="match status" value="1"/>
</dbReference>
<dbReference type="FunFam" id="3.40.50.10860:FF:000005">
    <property type="entry name" value="C-1-tetrahydrofolate synthase, cytoplasmic, putative"/>
    <property type="match status" value="1"/>
</dbReference>
<dbReference type="Gene3D" id="3.40.50.10860">
    <property type="entry name" value="Leucine Dehydrogenase, chain A, domain 1"/>
    <property type="match status" value="1"/>
</dbReference>
<dbReference type="Gene3D" id="3.40.50.720">
    <property type="entry name" value="NAD(P)-binding Rossmann-like Domain"/>
    <property type="match status" value="1"/>
</dbReference>
<dbReference type="HAMAP" id="MF_01576">
    <property type="entry name" value="THF_DHG_CYH"/>
    <property type="match status" value="1"/>
</dbReference>
<dbReference type="InterPro" id="IPR046346">
    <property type="entry name" value="Aminoacid_DH-like_N_sf"/>
</dbReference>
<dbReference type="InterPro" id="IPR036291">
    <property type="entry name" value="NAD(P)-bd_dom_sf"/>
</dbReference>
<dbReference type="InterPro" id="IPR000672">
    <property type="entry name" value="THF_DH/CycHdrlase"/>
</dbReference>
<dbReference type="InterPro" id="IPR020630">
    <property type="entry name" value="THF_DH/CycHdrlase_cat_dom"/>
</dbReference>
<dbReference type="InterPro" id="IPR020631">
    <property type="entry name" value="THF_DH/CycHdrlase_NAD-bd_dom"/>
</dbReference>
<dbReference type="NCBIfam" id="NF010789">
    <property type="entry name" value="PRK14193.1"/>
    <property type="match status" value="1"/>
</dbReference>
<dbReference type="PANTHER" id="PTHR48099:SF5">
    <property type="entry name" value="C-1-TETRAHYDROFOLATE SYNTHASE, CYTOPLASMIC"/>
    <property type="match status" value="1"/>
</dbReference>
<dbReference type="PANTHER" id="PTHR48099">
    <property type="entry name" value="C-1-TETRAHYDROFOLATE SYNTHASE, CYTOPLASMIC-RELATED"/>
    <property type="match status" value="1"/>
</dbReference>
<dbReference type="Pfam" id="PF00763">
    <property type="entry name" value="THF_DHG_CYH"/>
    <property type="match status" value="1"/>
</dbReference>
<dbReference type="Pfam" id="PF02882">
    <property type="entry name" value="THF_DHG_CYH_C"/>
    <property type="match status" value="1"/>
</dbReference>
<dbReference type="PRINTS" id="PR00085">
    <property type="entry name" value="THFDHDRGNASE"/>
</dbReference>
<dbReference type="SUPFAM" id="SSF53223">
    <property type="entry name" value="Aminoacid dehydrogenase-like, N-terminal domain"/>
    <property type="match status" value="1"/>
</dbReference>
<dbReference type="SUPFAM" id="SSF51735">
    <property type="entry name" value="NAD(P)-binding Rossmann-fold domains"/>
    <property type="match status" value="1"/>
</dbReference>
<accession>B0RDR2</accession>
<gene>
    <name evidence="1" type="primary">folD</name>
    <name type="ordered locus">CMS0585</name>
</gene>
<reference key="1">
    <citation type="journal article" date="2008" name="J. Bacteriol.">
        <title>Genome of the actinomycete plant pathogen Clavibacter michiganensis subsp. sepedonicus suggests recent niche adaptation.</title>
        <authorList>
            <person name="Bentley S.D."/>
            <person name="Corton C."/>
            <person name="Brown S.E."/>
            <person name="Barron A."/>
            <person name="Clark L."/>
            <person name="Doggett J."/>
            <person name="Harris B."/>
            <person name="Ormond D."/>
            <person name="Quail M.A."/>
            <person name="May G."/>
            <person name="Francis D."/>
            <person name="Knudson D."/>
            <person name="Parkhill J."/>
            <person name="Ishimaru C.A."/>
        </authorList>
    </citation>
    <scope>NUCLEOTIDE SEQUENCE [LARGE SCALE GENOMIC DNA]</scope>
    <source>
        <strain>ATCC 33113 / DSM 20744 / JCM 9667 / LMG 2889 / ICMP 2535 / C-1</strain>
    </source>
</reference>
<feature type="chain" id="PRO_1000087893" description="Bifunctional protein FolD">
    <location>
        <begin position="1"/>
        <end position="300"/>
    </location>
</feature>
<feature type="binding site" evidence="1">
    <location>
        <begin position="169"/>
        <end position="171"/>
    </location>
    <ligand>
        <name>NADP(+)</name>
        <dbReference type="ChEBI" id="CHEBI:58349"/>
    </ligand>
</feature>
<feature type="binding site" evidence="1">
    <location>
        <position position="196"/>
    </location>
    <ligand>
        <name>NADP(+)</name>
        <dbReference type="ChEBI" id="CHEBI:58349"/>
    </ligand>
</feature>
<feature type="binding site" evidence="1">
    <location>
        <position position="237"/>
    </location>
    <ligand>
        <name>NADP(+)</name>
        <dbReference type="ChEBI" id="CHEBI:58349"/>
    </ligand>
</feature>
<proteinExistence type="inferred from homology"/>
<keyword id="KW-0028">Amino-acid biosynthesis</keyword>
<keyword id="KW-0368">Histidine biosynthesis</keyword>
<keyword id="KW-0378">Hydrolase</keyword>
<keyword id="KW-0486">Methionine biosynthesis</keyword>
<keyword id="KW-0511">Multifunctional enzyme</keyword>
<keyword id="KW-0521">NADP</keyword>
<keyword id="KW-0554">One-carbon metabolism</keyword>
<keyword id="KW-0560">Oxidoreductase</keyword>
<keyword id="KW-0658">Purine biosynthesis</keyword>